<keyword id="KW-0067">ATP-binding</keyword>
<keyword id="KW-0235">DNA replication</keyword>
<keyword id="KW-0238">DNA-binding</keyword>
<keyword id="KW-0347">Helicase</keyword>
<keyword id="KW-0378">Hydrolase</keyword>
<keyword id="KW-0413">Isomerase</keyword>
<keyword id="KW-0479">Metal-binding</keyword>
<keyword id="KW-0547">Nucleotide-binding</keyword>
<keyword id="KW-0639">Primosome</keyword>
<keyword id="KW-1185">Reference proteome</keyword>
<keyword id="KW-0862">Zinc</keyword>
<accession>P57220</accession>
<comment type="function">
    <text evidence="1">Initiates the restart of stalled replication forks, which reloads the replicative helicase on sites other than the origin of replication. Recognizes and binds to abandoned replication forks and remodels them to uncover a helicase loading site. Promotes assembly of the primosome at these replication forks.</text>
</comment>
<comment type="catalytic activity">
    <reaction evidence="1">
        <text>Couples ATP hydrolysis with the unwinding of duplex DNA by translocating in the 3'-5' direction.</text>
        <dbReference type="EC" id="5.6.2.4"/>
    </reaction>
</comment>
<comment type="catalytic activity">
    <reaction evidence="1">
        <text>ATP + H2O = ADP + phosphate + H(+)</text>
        <dbReference type="Rhea" id="RHEA:13065"/>
        <dbReference type="ChEBI" id="CHEBI:15377"/>
        <dbReference type="ChEBI" id="CHEBI:15378"/>
        <dbReference type="ChEBI" id="CHEBI:30616"/>
        <dbReference type="ChEBI" id="CHEBI:43474"/>
        <dbReference type="ChEBI" id="CHEBI:456216"/>
        <dbReference type="EC" id="5.6.2.4"/>
    </reaction>
</comment>
<comment type="cofactor">
    <cofactor evidence="1">
        <name>Zn(2+)</name>
        <dbReference type="ChEBI" id="CHEBI:29105"/>
    </cofactor>
    <text evidence="1">Binds 2 zinc ions per subunit.</text>
</comment>
<comment type="subunit">
    <text evidence="1">Component of the replication restart primosome.</text>
</comment>
<comment type="similarity">
    <text evidence="1">Belongs to the helicase family. PriA subfamily.</text>
</comment>
<comment type="sequence caution" evidence="2">
    <conflict type="erroneous initiation">
        <sequence resource="EMBL-CDS" id="BAB12838"/>
    </conflict>
    <text>Truncated N-terminus.</text>
</comment>
<proteinExistence type="inferred from homology"/>
<sequence>MIIVKVILPIPIRQYFTYLMPDFMCPIIGGRILVPFNSKDVIGIVASFYKKNNVDQANFKHIKALIDTESLYSNMVLDIISWISNNYHCPAGNLFFSILPKILHSDYIIKNKYICQWSITKKGQELNLNYFKRRKKQLYVLLILKKKHILSTELKKYNISKIILKKLEIQELCKVNLNYKISFKRKIIRTKKKLFFNKKISIVLNDVLKKQCFSSWLLTRVNLYLKVKFYLGLIQSVLYKGVQILILVPYIKNINTIAFFLEKYFNASIDVMHSKLTSSKYFSNWVRTKNGENSIVIGTGKSIFLPFLKLGLIILLEEHNLKYKSINQCRYNIRDLGILRAYKEKIPIILDSETPSLKTLNNVLHRKCFYIKLNKYNHVNQINNNIINLKTEKIKFGLSLTLINEIYKNFTGKQVLLIFNKFVLFFFVLMCQKCNEIFKCTNCDDYFEINQYRNILFCKFCLIQIKKPIFCYNCGSFSLIVFKIGAEEIKKEMHSIFPKIPFFFFLNEKNINKNILNTKSFEFAISSPCIIIVTEELVQNYYFPHVKLISLICIDNYFLSFNYRAMEYFAQFYINLNQLTRSTKKSCKIFIQTSFPNDINLKEICNNGYFSFSKKAMAIRKSFLLPPWSFQTIVYSASTNTKYNIIFLSLMRKILQKKSRKYNCFLWVLGPNNAFLSINKHKYFHQLLIQCSSRVALNNVLNESIDVINIFTISKRVKWFIDIEPN</sequence>
<name>PRIA_BUCAI</name>
<reference key="1">
    <citation type="journal article" date="2000" name="Nature">
        <title>Genome sequence of the endocellular bacterial symbiont of aphids Buchnera sp. APS.</title>
        <authorList>
            <person name="Shigenobu S."/>
            <person name="Watanabe H."/>
            <person name="Hattori M."/>
            <person name="Sakaki Y."/>
            <person name="Ishikawa H."/>
        </authorList>
    </citation>
    <scope>NUCLEOTIDE SEQUENCE [LARGE SCALE GENOMIC DNA]</scope>
    <source>
        <strain>APS</strain>
    </source>
</reference>
<feature type="chain" id="PRO_0000102118" description="Replication restart protein PriA">
    <location>
        <begin position="1"/>
        <end position="726"/>
    </location>
</feature>
<feature type="domain" description="Helicase ATP-binding" evidence="1">
    <location>
        <begin position="234"/>
        <end position="373"/>
    </location>
</feature>
<feature type="short sequence motif" description="DEAH box" evidence="1">
    <location>
        <begin position="316"/>
        <end position="319"/>
    </location>
</feature>
<feature type="binding site" evidence="1">
    <location>
        <position position="234"/>
    </location>
    <ligand>
        <name>ATP</name>
        <dbReference type="ChEBI" id="CHEBI:30616"/>
    </ligand>
</feature>
<feature type="binding site" evidence="1">
    <location>
        <position position="431"/>
    </location>
    <ligand>
        <name>Zn(2+)</name>
        <dbReference type="ChEBI" id="CHEBI:29105"/>
        <label>1</label>
    </ligand>
</feature>
<feature type="binding site" evidence="1">
    <location>
        <position position="434"/>
    </location>
    <ligand>
        <name>Zn(2+)</name>
        <dbReference type="ChEBI" id="CHEBI:29105"/>
        <label>1</label>
    </ligand>
</feature>
<feature type="binding site" evidence="1">
    <location>
        <position position="440"/>
    </location>
    <ligand>
        <name>Zn(2+)</name>
        <dbReference type="ChEBI" id="CHEBI:29105"/>
        <label>2</label>
    </ligand>
</feature>
<feature type="binding site" evidence="1">
    <location>
        <position position="443"/>
    </location>
    <ligand>
        <name>Zn(2+)</name>
        <dbReference type="ChEBI" id="CHEBI:29105"/>
        <label>2</label>
    </ligand>
</feature>
<feature type="binding site" evidence="1">
    <location>
        <position position="458"/>
    </location>
    <ligand>
        <name>Zn(2+)</name>
        <dbReference type="ChEBI" id="CHEBI:29105"/>
        <label>2</label>
    </ligand>
</feature>
<feature type="binding site" evidence="1">
    <location>
        <position position="461"/>
    </location>
    <ligand>
        <name>Zn(2+)</name>
        <dbReference type="ChEBI" id="CHEBI:29105"/>
        <label>2</label>
    </ligand>
</feature>
<feature type="binding site" evidence="1">
    <location>
        <position position="471"/>
    </location>
    <ligand>
        <name>Zn(2+)</name>
        <dbReference type="ChEBI" id="CHEBI:29105"/>
        <label>1</label>
    </ligand>
</feature>
<feature type="binding site" evidence="1">
    <location>
        <position position="474"/>
    </location>
    <ligand>
        <name>Zn(2+)</name>
        <dbReference type="ChEBI" id="CHEBI:29105"/>
        <label>1</label>
    </ligand>
</feature>
<dbReference type="EC" id="5.6.2.4" evidence="1"/>
<dbReference type="EMBL" id="BA000003">
    <property type="protein sequence ID" value="BAB12838.1"/>
    <property type="status" value="ALT_INIT"/>
    <property type="molecule type" value="Genomic_DNA"/>
</dbReference>
<dbReference type="RefSeq" id="NP_239952.2">
    <property type="nucleotide sequence ID" value="NC_002528.1"/>
</dbReference>
<dbReference type="RefSeq" id="WP_010895957.1">
    <property type="nucleotide sequence ID" value="NC_002528.1"/>
</dbReference>
<dbReference type="SMR" id="P57220"/>
<dbReference type="STRING" id="563178.BUAP5A_118"/>
<dbReference type="EnsemblBacteria" id="BAB12838">
    <property type="protein sequence ID" value="BAB12838"/>
    <property type="gene ID" value="BAB12838"/>
</dbReference>
<dbReference type="KEGG" id="buc:BU120"/>
<dbReference type="PATRIC" id="fig|107806.10.peg.129"/>
<dbReference type="eggNOG" id="COG1198">
    <property type="taxonomic scope" value="Bacteria"/>
</dbReference>
<dbReference type="HOGENOM" id="CLU_013353_3_1_6"/>
<dbReference type="Proteomes" id="UP000001806">
    <property type="component" value="Chromosome"/>
</dbReference>
<dbReference type="GO" id="GO:1990077">
    <property type="term" value="C:primosome complex"/>
    <property type="evidence" value="ECO:0007669"/>
    <property type="project" value="UniProtKB-UniRule"/>
</dbReference>
<dbReference type="GO" id="GO:0043138">
    <property type="term" value="F:3'-5' DNA helicase activity"/>
    <property type="evidence" value="ECO:0007669"/>
    <property type="project" value="TreeGrafter"/>
</dbReference>
<dbReference type="GO" id="GO:0005524">
    <property type="term" value="F:ATP binding"/>
    <property type="evidence" value="ECO:0007669"/>
    <property type="project" value="UniProtKB-UniRule"/>
</dbReference>
<dbReference type="GO" id="GO:0016887">
    <property type="term" value="F:ATP hydrolysis activity"/>
    <property type="evidence" value="ECO:0007669"/>
    <property type="project" value="RHEA"/>
</dbReference>
<dbReference type="GO" id="GO:0003677">
    <property type="term" value="F:DNA binding"/>
    <property type="evidence" value="ECO:0007669"/>
    <property type="project" value="UniProtKB-UniRule"/>
</dbReference>
<dbReference type="GO" id="GO:0008270">
    <property type="term" value="F:zinc ion binding"/>
    <property type="evidence" value="ECO:0007669"/>
    <property type="project" value="UniProtKB-UniRule"/>
</dbReference>
<dbReference type="GO" id="GO:0006310">
    <property type="term" value="P:DNA recombination"/>
    <property type="evidence" value="ECO:0007669"/>
    <property type="project" value="InterPro"/>
</dbReference>
<dbReference type="GO" id="GO:0006270">
    <property type="term" value="P:DNA replication initiation"/>
    <property type="evidence" value="ECO:0007669"/>
    <property type="project" value="TreeGrafter"/>
</dbReference>
<dbReference type="GO" id="GO:0006269">
    <property type="term" value="P:DNA replication, synthesis of primer"/>
    <property type="evidence" value="ECO:0007669"/>
    <property type="project" value="UniProtKB-KW"/>
</dbReference>
<dbReference type="GO" id="GO:0006302">
    <property type="term" value="P:double-strand break repair"/>
    <property type="evidence" value="ECO:0007669"/>
    <property type="project" value="InterPro"/>
</dbReference>
<dbReference type="Gene3D" id="3.40.50.300">
    <property type="entry name" value="P-loop containing nucleotide triphosphate hydrolases"/>
    <property type="match status" value="1"/>
</dbReference>
<dbReference type="Gene3D" id="3.40.1440.60">
    <property type="entry name" value="PriA, 3(prime) DNA-binding domain"/>
    <property type="match status" value="1"/>
</dbReference>
<dbReference type="HAMAP" id="MF_00983">
    <property type="entry name" value="PriA"/>
    <property type="match status" value="1"/>
</dbReference>
<dbReference type="InterPro" id="IPR014001">
    <property type="entry name" value="Helicase_ATP-bd"/>
</dbReference>
<dbReference type="InterPro" id="IPR027417">
    <property type="entry name" value="P-loop_NTPase"/>
</dbReference>
<dbReference type="InterPro" id="IPR005259">
    <property type="entry name" value="PriA"/>
</dbReference>
<dbReference type="InterPro" id="IPR041222">
    <property type="entry name" value="PriA_3primeBD"/>
</dbReference>
<dbReference type="InterPro" id="IPR042115">
    <property type="entry name" value="PriA_3primeBD_sf"/>
</dbReference>
<dbReference type="InterPro" id="IPR041236">
    <property type="entry name" value="PriA_C"/>
</dbReference>
<dbReference type="InterPro" id="IPR050880">
    <property type="entry name" value="PriA_helicase"/>
</dbReference>
<dbReference type="NCBIfam" id="TIGR00595">
    <property type="entry name" value="priA"/>
    <property type="match status" value="1"/>
</dbReference>
<dbReference type="PANTHER" id="PTHR30580">
    <property type="entry name" value="PRIMOSOMAL PROTEIN N"/>
    <property type="match status" value="1"/>
</dbReference>
<dbReference type="PANTHER" id="PTHR30580:SF0">
    <property type="entry name" value="PRIMOSOMAL PROTEIN N"/>
    <property type="match status" value="1"/>
</dbReference>
<dbReference type="Pfam" id="PF17764">
    <property type="entry name" value="PriA_3primeBD"/>
    <property type="match status" value="1"/>
</dbReference>
<dbReference type="Pfam" id="PF18074">
    <property type="entry name" value="PriA_C"/>
    <property type="match status" value="1"/>
</dbReference>
<dbReference type="SUPFAM" id="SSF52540">
    <property type="entry name" value="P-loop containing nucleoside triphosphate hydrolases"/>
    <property type="match status" value="1"/>
</dbReference>
<dbReference type="PROSITE" id="PS51192">
    <property type="entry name" value="HELICASE_ATP_BIND_1"/>
    <property type="match status" value="1"/>
</dbReference>
<protein>
    <recommendedName>
        <fullName evidence="1">Replication restart protein PriA</fullName>
    </recommendedName>
    <alternativeName>
        <fullName evidence="1">ATP-dependent DNA helicase PriA</fullName>
        <ecNumber evidence="1">5.6.2.4</ecNumber>
    </alternativeName>
    <alternativeName>
        <fullName evidence="1">DNA 3'-5' helicase PriA</fullName>
    </alternativeName>
</protein>
<organism>
    <name type="scientific">Buchnera aphidicola subsp. Acyrthosiphon pisum (strain APS)</name>
    <name type="common">Acyrthosiphon pisum symbiotic bacterium</name>
    <dbReference type="NCBI Taxonomy" id="107806"/>
    <lineage>
        <taxon>Bacteria</taxon>
        <taxon>Pseudomonadati</taxon>
        <taxon>Pseudomonadota</taxon>
        <taxon>Gammaproteobacteria</taxon>
        <taxon>Enterobacterales</taxon>
        <taxon>Erwiniaceae</taxon>
        <taxon>Buchnera</taxon>
    </lineage>
</organism>
<evidence type="ECO:0000255" key="1">
    <source>
        <dbReference type="HAMAP-Rule" id="MF_00983"/>
    </source>
</evidence>
<evidence type="ECO:0000305" key="2"/>
<gene>
    <name evidence="1" type="primary">priA</name>
    <name type="ordered locus">BU120</name>
</gene>